<protein>
    <recommendedName>
        <fullName>Uncharacterized transmembrane protein DDB_G0282757</fullName>
    </recommendedName>
</protein>
<sequence>MNSKQILSLSAFAMTIATAAAGNWNAGDTIALLIGIAMFFVLLLALLGWISRKK</sequence>
<gene>
    <name type="ORF">DDB_G0282757</name>
</gene>
<keyword id="KW-0472">Membrane</keyword>
<keyword id="KW-1185">Reference proteome</keyword>
<keyword id="KW-0732">Signal</keyword>
<keyword id="KW-0812">Transmembrane</keyword>
<keyword id="KW-1133">Transmembrane helix</keyword>
<organism>
    <name type="scientific">Dictyostelium discoideum</name>
    <name type="common">Social amoeba</name>
    <dbReference type="NCBI Taxonomy" id="44689"/>
    <lineage>
        <taxon>Eukaryota</taxon>
        <taxon>Amoebozoa</taxon>
        <taxon>Evosea</taxon>
        <taxon>Eumycetozoa</taxon>
        <taxon>Dictyostelia</taxon>
        <taxon>Dictyosteliales</taxon>
        <taxon>Dictyosteliaceae</taxon>
        <taxon>Dictyostelium</taxon>
    </lineage>
</organism>
<reference key="1">
    <citation type="journal article" date="2005" name="Nature">
        <title>The genome of the social amoeba Dictyostelium discoideum.</title>
        <authorList>
            <person name="Eichinger L."/>
            <person name="Pachebat J.A."/>
            <person name="Gloeckner G."/>
            <person name="Rajandream M.A."/>
            <person name="Sucgang R."/>
            <person name="Berriman M."/>
            <person name="Song J."/>
            <person name="Olsen R."/>
            <person name="Szafranski K."/>
            <person name="Xu Q."/>
            <person name="Tunggal B."/>
            <person name="Kummerfeld S."/>
            <person name="Madera M."/>
            <person name="Konfortov B.A."/>
            <person name="Rivero F."/>
            <person name="Bankier A.T."/>
            <person name="Lehmann R."/>
            <person name="Hamlin N."/>
            <person name="Davies R."/>
            <person name="Gaudet P."/>
            <person name="Fey P."/>
            <person name="Pilcher K."/>
            <person name="Chen G."/>
            <person name="Saunders D."/>
            <person name="Sodergren E.J."/>
            <person name="Davis P."/>
            <person name="Kerhornou A."/>
            <person name="Nie X."/>
            <person name="Hall N."/>
            <person name="Anjard C."/>
            <person name="Hemphill L."/>
            <person name="Bason N."/>
            <person name="Farbrother P."/>
            <person name="Desany B."/>
            <person name="Just E."/>
            <person name="Morio T."/>
            <person name="Rost R."/>
            <person name="Churcher C.M."/>
            <person name="Cooper J."/>
            <person name="Haydock S."/>
            <person name="van Driessche N."/>
            <person name="Cronin A."/>
            <person name="Goodhead I."/>
            <person name="Muzny D.M."/>
            <person name="Mourier T."/>
            <person name="Pain A."/>
            <person name="Lu M."/>
            <person name="Harper D."/>
            <person name="Lindsay R."/>
            <person name="Hauser H."/>
            <person name="James K.D."/>
            <person name="Quiles M."/>
            <person name="Madan Babu M."/>
            <person name="Saito T."/>
            <person name="Buchrieser C."/>
            <person name="Wardroper A."/>
            <person name="Felder M."/>
            <person name="Thangavelu M."/>
            <person name="Johnson D."/>
            <person name="Knights A."/>
            <person name="Loulseged H."/>
            <person name="Mungall K.L."/>
            <person name="Oliver K."/>
            <person name="Price C."/>
            <person name="Quail M.A."/>
            <person name="Urushihara H."/>
            <person name="Hernandez J."/>
            <person name="Rabbinowitsch E."/>
            <person name="Steffen D."/>
            <person name="Sanders M."/>
            <person name="Ma J."/>
            <person name="Kohara Y."/>
            <person name="Sharp S."/>
            <person name="Simmonds M.N."/>
            <person name="Spiegler S."/>
            <person name="Tivey A."/>
            <person name="Sugano S."/>
            <person name="White B."/>
            <person name="Walker D."/>
            <person name="Woodward J.R."/>
            <person name="Winckler T."/>
            <person name="Tanaka Y."/>
            <person name="Shaulsky G."/>
            <person name="Schleicher M."/>
            <person name="Weinstock G.M."/>
            <person name="Rosenthal A."/>
            <person name="Cox E.C."/>
            <person name="Chisholm R.L."/>
            <person name="Gibbs R.A."/>
            <person name="Loomis W.F."/>
            <person name="Platzer M."/>
            <person name="Kay R.R."/>
            <person name="Williams J.G."/>
            <person name="Dear P.H."/>
            <person name="Noegel A.A."/>
            <person name="Barrell B.G."/>
            <person name="Kuspa A."/>
        </authorList>
    </citation>
    <scope>NUCLEOTIDE SEQUENCE [LARGE SCALE GENOMIC DNA]</scope>
    <source>
        <strain>AX4</strain>
    </source>
</reference>
<evidence type="ECO:0000255" key="1"/>
<evidence type="ECO:0000305" key="2"/>
<comment type="subcellular location">
    <subcellularLocation>
        <location evidence="2">Membrane</location>
        <topology evidence="2">Single-pass type I membrane protein</topology>
    </subcellularLocation>
</comment>
<proteinExistence type="inferred from homology"/>
<name>Y8379_DICDI</name>
<accession>Q54SJ4</accession>
<feature type="signal peptide" evidence="1">
    <location>
        <begin position="1"/>
        <end position="21"/>
    </location>
</feature>
<feature type="chain" id="PRO_0000351261" description="Uncharacterized transmembrane protein DDB_G0282757">
    <location>
        <begin position="22"/>
        <end position="54"/>
    </location>
</feature>
<feature type="topological domain" description="Extracellular" evidence="1">
    <location>
        <begin position="22"/>
        <end position="29"/>
    </location>
</feature>
<feature type="transmembrane region" description="Helical" evidence="1">
    <location>
        <begin position="30"/>
        <end position="50"/>
    </location>
</feature>
<feature type="topological domain" description="Cytoplasmic" evidence="1">
    <location>
        <begin position="51"/>
        <end position="54"/>
    </location>
</feature>
<dbReference type="EMBL" id="AAFI02000047">
    <property type="protein sequence ID" value="EAL66238.1"/>
    <property type="molecule type" value="Genomic_DNA"/>
</dbReference>
<dbReference type="RefSeq" id="XP_640045.1">
    <property type="nucleotide sequence ID" value="XM_634953.1"/>
</dbReference>
<dbReference type="SMR" id="Q54SJ4"/>
<dbReference type="FunCoup" id="Q54SJ4">
    <property type="interactions" value="131"/>
</dbReference>
<dbReference type="PaxDb" id="44689-DDB0218379"/>
<dbReference type="EnsemblProtists" id="EAL66238">
    <property type="protein sequence ID" value="EAL66238"/>
    <property type="gene ID" value="DDB_G0282757"/>
</dbReference>
<dbReference type="GeneID" id="8623572"/>
<dbReference type="KEGG" id="ddi:DDB_G0282757"/>
<dbReference type="dictyBase" id="DDB_G0282757"/>
<dbReference type="VEuPathDB" id="AmoebaDB:DDB_G0282757"/>
<dbReference type="eggNOG" id="ENOG502RIJ8">
    <property type="taxonomic scope" value="Eukaryota"/>
</dbReference>
<dbReference type="HOGENOM" id="CLU_3054362_0_0_1"/>
<dbReference type="InParanoid" id="Q54SJ4"/>
<dbReference type="PRO" id="PR:Q54SJ4"/>
<dbReference type="Proteomes" id="UP000002195">
    <property type="component" value="Chromosome 3"/>
</dbReference>
<dbReference type="GO" id="GO:0016020">
    <property type="term" value="C:membrane"/>
    <property type="evidence" value="ECO:0007669"/>
    <property type="project" value="UniProtKB-SubCell"/>
</dbReference>